<organism>
    <name type="scientific">Arabidopsis thaliana</name>
    <name type="common">Mouse-ear cress</name>
    <dbReference type="NCBI Taxonomy" id="3702"/>
    <lineage>
        <taxon>Eukaryota</taxon>
        <taxon>Viridiplantae</taxon>
        <taxon>Streptophyta</taxon>
        <taxon>Embryophyta</taxon>
        <taxon>Tracheophyta</taxon>
        <taxon>Spermatophyta</taxon>
        <taxon>Magnoliopsida</taxon>
        <taxon>eudicotyledons</taxon>
        <taxon>Gunneridae</taxon>
        <taxon>Pentapetalae</taxon>
        <taxon>rosids</taxon>
        <taxon>malvids</taxon>
        <taxon>Brassicales</taxon>
        <taxon>Brassicaceae</taxon>
        <taxon>Camelineae</taxon>
        <taxon>Arabidopsis</taxon>
    </lineage>
</organism>
<protein>
    <recommendedName>
        <fullName>tRNA-splicing endonuclease subunit Sen2-1</fullName>
        <ecNumber>4.6.1.16</ecNumber>
    </recommendedName>
    <alternativeName>
        <fullName>tRNA-intron endonuclease Sen2-1</fullName>
        <shortName>AtSen1</shortName>
    </alternativeName>
</protein>
<dbReference type="EC" id="4.6.1.16"/>
<dbReference type="EMBL" id="AB036339">
    <property type="protein sequence ID" value="BAA88627.1"/>
    <property type="molecule type" value="mRNA"/>
</dbReference>
<dbReference type="EMBL" id="AB036340">
    <property type="protein sequence ID" value="BAA88628.1"/>
    <property type="molecule type" value="Genomic_DNA"/>
</dbReference>
<dbReference type="EMBL" id="AL138657">
    <property type="protein sequence ID" value="CAB75488.1"/>
    <property type="molecule type" value="Genomic_DNA"/>
</dbReference>
<dbReference type="EMBL" id="CP002686">
    <property type="protein sequence ID" value="AEE78047.1"/>
    <property type="molecule type" value="Genomic_DNA"/>
</dbReference>
<dbReference type="EMBL" id="CP002686">
    <property type="protein sequence ID" value="AEE78048.1"/>
    <property type="molecule type" value="Genomic_DNA"/>
</dbReference>
<dbReference type="EMBL" id="AK221492">
    <property type="protein sequence ID" value="BAD94688.1"/>
    <property type="molecule type" value="mRNA"/>
</dbReference>
<dbReference type="PIR" id="T47499">
    <property type="entry name" value="T47499"/>
</dbReference>
<dbReference type="RefSeq" id="NP_001078245.1">
    <property type="nucleotide sequence ID" value="NM_001084776.2"/>
</dbReference>
<dbReference type="RefSeq" id="NP_190145.1">
    <property type="nucleotide sequence ID" value="NM_114428.4"/>
</dbReference>
<dbReference type="SMR" id="Q9M1E8"/>
<dbReference type="FunCoup" id="Q9M1E8">
    <property type="interactions" value="33"/>
</dbReference>
<dbReference type="STRING" id="3702.Q9M1E8"/>
<dbReference type="PaxDb" id="3702-AT3G45590.1"/>
<dbReference type="ProteomicsDB" id="234507"/>
<dbReference type="EnsemblPlants" id="AT3G45590.1">
    <property type="protein sequence ID" value="AT3G45590.1"/>
    <property type="gene ID" value="AT3G45590"/>
</dbReference>
<dbReference type="EnsemblPlants" id="AT3G45590.2">
    <property type="protein sequence ID" value="AT3G45590.2"/>
    <property type="gene ID" value="AT3G45590"/>
</dbReference>
<dbReference type="GeneID" id="823701"/>
<dbReference type="Gramene" id="AT3G45590.1">
    <property type="protein sequence ID" value="AT3G45590.1"/>
    <property type="gene ID" value="AT3G45590"/>
</dbReference>
<dbReference type="Gramene" id="AT3G45590.2">
    <property type="protein sequence ID" value="AT3G45590.2"/>
    <property type="gene ID" value="AT3G45590"/>
</dbReference>
<dbReference type="KEGG" id="ath:AT3G45590"/>
<dbReference type="Araport" id="AT3G45590"/>
<dbReference type="TAIR" id="AT3G45590">
    <property type="gene designation" value="SEN1"/>
</dbReference>
<dbReference type="eggNOG" id="KOG4685">
    <property type="taxonomic scope" value="Eukaryota"/>
</dbReference>
<dbReference type="HOGENOM" id="CLU_053228_0_0_1"/>
<dbReference type="InParanoid" id="Q9M1E8"/>
<dbReference type="OMA" id="DTELNND"/>
<dbReference type="OrthoDB" id="10249562at2759"/>
<dbReference type="PhylomeDB" id="Q9M1E8"/>
<dbReference type="BRENDA" id="4.6.1.16">
    <property type="organism ID" value="399"/>
</dbReference>
<dbReference type="PRO" id="PR:Q9M1E8"/>
<dbReference type="Proteomes" id="UP000006548">
    <property type="component" value="Chromosome 3"/>
</dbReference>
<dbReference type="ExpressionAtlas" id="Q9M1E8">
    <property type="expression patterns" value="baseline and differential"/>
</dbReference>
<dbReference type="GO" id="GO:0005634">
    <property type="term" value="C:nucleus"/>
    <property type="evidence" value="ECO:0007669"/>
    <property type="project" value="UniProtKB-SubCell"/>
</dbReference>
<dbReference type="GO" id="GO:0016829">
    <property type="term" value="F:lyase activity"/>
    <property type="evidence" value="ECO:0007669"/>
    <property type="project" value="UniProtKB-KW"/>
</dbReference>
<dbReference type="GO" id="GO:0003676">
    <property type="term" value="F:nucleic acid binding"/>
    <property type="evidence" value="ECO:0007669"/>
    <property type="project" value="InterPro"/>
</dbReference>
<dbReference type="GO" id="GO:0000213">
    <property type="term" value="F:tRNA-intron endonuclease activity"/>
    <property type="evidence" value="ECO:0007669"/>
    <property type="project" value="UniProtKB-EC"/>
</dbReference>
<dbReference type="GO" id="GO:0006397">
    <property type="term" value="P:mRNA processing"/>
    <property type="evidence" value="ECO:0007669"/>
    <property type="project" value="UniProtKB-KW"/>
</dbReference>
<dbReference type="GO" id="GO:0006388">
    <property type="term" value="P:tRNA splicing, via endonucleolytic cleavage and ligation"/>
    <property type="evidence" value="ECO:0007669"/>
    <property type="project" value="InterPro"/>
</dbReference>
<dbReference type="CDD" id="cd22363">
    <property type="entry name" value="tRNA-intron_lyase_C"/>
    <property type="match status" value="1"/>
</dbReference>
<dbReference type="Gene3D" id="3.40.1350.10">
    <property type="match status" value="1"/>
</dbReference>
<dbReference type="InterPro" id="IPR011856">
    <property type="entry name" value="tRNA_endonuc-like_dom_sf"/>
</dbReference>
<dbReference type="InterPro" id="IPR036167">
    <property type="entry name" value="tRNA_intron_Endo_cat-like_sf"/>
</dbReference>
<dbReference type="InterPro" id="IPR006677">
    <property type="entry name" value="tRNA_intron_Endonuc_cat-like"/>
</dbReference>
<dbReference type="InterPro" id="IPR006678">
    <property type="entry name" value="tRNA_intron_Endonuc_N"/>
</dbReference>
<dbReference type="InterPro" id="IPR006676">
    <property type="entry name" value="tRNA_splic"/>
</dbReference>
<dbReference type="PANTHER" id="PTHR21227">
    <property type="entry name" value="TRNA-SPLICING ENDONUCLEASE SUBUNIT SEN2"/>
    <property type="match status" value="1"/>
</dbReference>
<dbReference type="PANTHER" id="PTHR21227:SF0">
    <property type="entry name" value="TRNA-SPLICING ENDONUCLEASE SUBUNIT SEN2"/>
    <property type="match status" value="1"/>
</dbReference>
<dbReference type="Pfam" id="PF01974">
    <property type="entry name" value="tRNA_int_endo"/>
    <property type="match status" value="1"/>
</dbReference>
<dbReference type="Pfam" id="PF02778">
    <property type="entry name" value="tRNA_int_endo_N"/>
    <property type="match status" value="1"/>
</dbReference>
<dbReference type="SUPFAM" id="SSF53032">
    <property type="entry name" value="tRNA-intron endonuclease catalytic domain-like"/>
    <property type="match status" value="1"/>
</dbReference>
<gene>
    <name type="primary">SEN1</name>
    <name type="ordered locus">At3g45590</name>
    <name type="ORF">F9K21.170</name>
</gene>
<evidence type="ECO:0000250" key="1"/>
<evidence type="ECO:0000269" key="2">
    <source>
    </source>
</evidence>
<evidence type="ECO:0000305" key="3"/>
<comment type="function">
    <text evidence="1">Constitutes one of the two catalytic subunit of the tRNA-splicing endonuclease complex, a complex responsible for identification and cleavage of the splice sites in pre-tRNA. It cleaves pre-tRNA at the 5'- and 3'-splice sites to release the intron. The products are an intron and two tRNA half-molecules bearing 2',3'-cyclic phosphate and 5'-OH termini. There are no conserved sequences at the splice sites, but the intron is invariably located at the same site in the gene, placing the splice sites an invariant distance from the constant structural features of the tRNA body. Probably carries the active site for 5'-splice site cleavage (By similarity).</text>
</comment>
<comment type="catalytic activity">
    <reaction>
        <text>pretRNA = a 3'-half-tRNA molecule with a 5'-OH end + a 5'-half-tRNA molecule with a 2',3'-cyclic phosphate end + an intron with a 2',3'-cyclic phosphate and a 5'-hydroxyl terminus.</text>
        <dbReference type="EC" id="4.6.1.16"/>
    </reaction>
</comment>
<comment type="subunit">
    <text evidence="1">tRNA splicing endonuclease is a heterotetramer composed of SEN2, SEN15, SEN34/LENG5 and SEN54.</text>
</comment>
<comment type="subcellular location">
    <subcellularLocation>
        <location evidence="1">Nucleus</location>
    </subcellularLocation>
</comment>
<comment type="similarity">
    <text evidence="3">Belongs to the tRNA-intron endonuclease family.</text>
</comment>
<accession>Q9M1E8</accession>
<accession>Q9S7L3</accession>
<keyword id="KW-0456">Lyase</keyword>
<keyword id="KW-0507">mRNA processing</keyword>
<keyword id="KW-0539">Nucleus</keyword>
<keyword id="KW-1185">Reference proteome</keyword>
<keyword id="KW-0819">tRNA processing</keyword>
<reference key="1">
    <citation type="journal article" date="2000" name="Gene">
        <title>Identification of two catalytic subunits of tRNA splicing endonuclease from Arabidopsis thaliana.</title>
        <authorList>
            <person name="Akama K."/>
            <person name="Junker V."/>
            <person name="Beier H."/>
        </authorList>
    </citation>
    <scope>NUCLEOTIDE SEQUENCE [GENOMIC DNA / MRNA]</scope>
    <scope>VARIANTS LEU-24; GLN-27; GLN-52; SER-67; SER-167; THR-191; 199-ARG--LYS-205 DELINS GLY-GLN-VAL-LYS-THR-GLU-ASN AND 213-GLU-ASP-214 DELINS ASP-GLU</scope>
    <source>
        <strain>cv. Columbia</strain>
        <strain>cv. Landsberg erecta</strain>
    </source>
</reference>
<reference key="2">
    <citation type="journal article" date="2000" name="Nature">
        <title>Sequence and analysis of chromosome 3 of the plant Arabidopsis thaliana.</title>
        <authorList>
            <person name="Salanoubat M."/>
            <person name="Lemcke K."/>
            <person name="Rieger M."/>
            <person name="Ansorge W."/>
            <person name="Unseld M."/>
            <person name="Fartmann B."/>
            <person name="Valle G."/>
            <person name="Bloecker H."/>
            <person name="Perez-Alonso M."/>
            <person name="Obermaier B."/>
            <person name="Delseny M."/>
            <person name="Boutry M."/>
            <person name="Grivell L.A."/>
            <person name="Mache R."/>
            <person name="Puigdomenech P."/>
            <person name="De Simone V."/>
            <person name="Choisne N."/>
            <person name="Artiguenave F."/>
            <person name="Robert C."/>
            <person name="Brottier P."/>
            <person name="Wincker P."/>
            <person name="Cattolico L."/>
            <person name="Weissenbach J."/>
            <person name="Saurin W."/>
            <person name="Quetier F."/>
            <person name="Schaefer M."/>
            <person name="Mueller-Auer S."/>
            <person name="Gabel C."/>
            <person name="Fuchs M."/>
            <person name="Benes V."/>
            <person name="Wurmbach E."/>
            <person name="Drzonek H."/>
            <person name="Erfle H."/>
            <person name="Jordan N."/>
            <person name="Bangert S."/>
            <person name="Wiedelmann R."/>
            <person name="Kranz H."/>
            <person name="Voss H."/>
            <person name="Holland R."/>
            <person name="Brandt P."/>
            <person name="Nyakatura G."/>
            <person name="Vezzi A."/>
            <person name="D'Angelo M."/>
            <person name="Pallavicini A."/>
            <person name="Toppo S."/>
            <person name="Simionati B."/>
            <person name="Conrad A."/>
            <person name="Hornischer K."/>
            <person name="Kauer G."/>
            <person name="Loehnert T.-H."/>
            <person name="Nordsiek G."/>
            <person name="Reichelt J."/>
            <person name="Scharfe M."/>
            <person name="Schoen O."/>
            <person name="Bargues M."/>
            <person name="Terol J."/>
            <person name="Climent J."/>
            <person name="Navarro P."/>
            <person name="Collado C."/>
            <person name="Perez-Perez A."/>
            <person name="Ottenwaelder B."/>
            <person name="Duchemin D."/>
            <person name="Cooke R."/>
            <person name="Laudie M."/>
            <person name="Berger-Llauro C."/>
            <person name="Purnelle B."/>
            <person name="Masuy D."/>
            <person name="de Haan M."/>
            <person name="Maarse A.C."/>
            <person name="Alcaraz J.-P."/>
            <person name="Cottet A."/>
            <person name="Casacuberta E."/>
            <person name="Monfort A."/>
            <person name="Argiriou A."/>
            <person name="Flores M."/>
            <person name="Liguori R."/>
            <person name="Vitale D."/>
            <person name="Mannhaupt G."/>
            <person name="Haase D."/>
            <person name="Schoof H."/>
            <person name="Rudd S."/>
            <person name="Zaccaria P."/>
            <person name="Mewes H.-W."/>
            <person name="Mayer K.F.X."/>
            <person name="Kaul S."/>
            <person name="Town C.D."/>
            <person name="Koo H.L."/>
            <person name="Tallon L.J."/>
            <person name="Jenkins J."/>
            <person name="Rooney T."/>
            <person name="Rizzo M."/>
            <person name="Walts A."/>
            <person name="Utterback T."/>
            <person name="Fujii C.Y."/>
            <person name="Shea T.P."/>
            <person name="Creasy T.H."/>
            <person name="Haas B."/>
            <person name="Maiti R."/>
            <person name="Wu D."/>
            <person name="Peterson J."/>
            <person name="Van Aken S."/>
            <person name="Pai G."/>
            <person name="Militscher J."/>
            <person name="Sellers P."/>
            <person name="Gill J.E."/>
            <person name="Feldblyum T.V."/>
            <person name="Preuss D."/>
            <person name="Lin X."/>
            <person name="Nierman W.C."/>
            <person name="Salzberg S.L."/>
            <person name="White O."/>
            <person name="Venter J.C."/>
            <person name="Fraser C.M."/>
            <person name="Kaneko T."/>
            <person name="Nakamura Y."/>
            <person name="Sato S."/>
            <person name="Kato T."/>
            <person name="Asamizu E."/>
            <person name="Sasamoto S."/>
            <person name="Kimura T."/>
            <person name="Idesawa K."/>
            <person name="Kawashima K."/>
            <person name="Kishida Y."/>
            <person name="Kiyokawa C."/>
            <person name="Kohara M."/>
            <person name="Matsumoto M."/>
            <person name="Matsuno A."/>
            <person name="Muraki A."/>
            <person name="Nakayama S."/>
            <person name="Nakazaki N."/>
            <person name="Shinpo S."/>
            <person name="Takeuchi C."/>
            <person name="Wada T."/>
            <person name="Watanabe A."/>
            <person name="Yamada M."/>
            <person name="Yasuda M."/>
            <person name="Tabata S."/>
        </authorList>
    </citation>
    <scope>NUCLEOTIDE SEQUENCE [LARGE SCALE GENOMIC DNA]</scope>
    <source>
        <strain>cv. Columbia</strain>
    </source>
</reference>
<reference key="3">
    <citation type="journal article" date="2017" name="Plant J.">
        <title>Araport11: a complete reannotation of the Arabidopsis thaliana reference genome.</title>
        <authorList>
            <person name="Cheng C.Y."/>
            <person name="Krishnakumar V."/>
            <person name="Chan A.P."/>
            <person name="Thibaud-Nissen F."/>
            <person name="Schobel S."/>
            <person name="Town C.D."/>
        </authorList>
    </citation>
    <scope>GENOME REANNOTATION</scope>
    <source>
        <strain>cv. Columbia</strain>
    </source>
</reference>
<reference key="4">
    <citation type="submission" date="2005-03" db="EMBL/GenBank/DDBJ databases">
        <title>Large-scale analysis of RIKEN Arabidopsis full-length (RAFL) cDNAs.</title>
        <authorList>
            <person name="Totoki Y."/>
            <person name="Seki M."/>
            <person name="Ishida J."/>
            <person name="Nakajima M."/>
            <person name="Enju A."/>
            <person name="Kamiya A."/>
            <person name="Narusaka M."/>
            <person name="Shin-i T."/>
            <person name="Nakagawa M."/>
            <person name="Sakamoto N."/>
            <person name="Oishi K."/>
            <person name="Kohara Y."/>
            <person name="Kobayashi M."/>
            <person name="Toyoda A."/>
            <person name="Sakaki Y."/>
            <person name="Sakurai T."/>
            <person name="Iida K."/>
            <person name="Akiyama K."/>
            <person name="Satou M."/>
            <person name="Toyoda T."/>
            <person name="Konagaya A."/>
            <person name="Carninci P."/>
            <person name="Kawai J."/>
            <person name="Hayashizaki Y."/>
            <person name="Shinozaki K."/>
        </authorList>
    </citation>
    <scope>NUCLEOTIDE SEQUENCE [LARGE SCALE MRNA]</scope>
    <source>
        <strain>cv. Columbia</strain>
    </source>
</reference>
<name>SEN21_ARATH</name>
<proteinExistence type="evidence at transcript level"/>
<feature type="chain" id="PRO_0000109456" description="tRNA-splicing endonuclease subunit Sen2-1">
    <location>
        <begin position="1"/>
        <end position="237"/>
    </location>
</feature>
<feature type="active site" evidence="1">
    <location>
        <position position="148"/>
    </location>
</feature>
<feature type="active site" evidence="1">
    <location>
        <position position="156"/>
    </location>
</feature>
<feature type="active site" evidence="1">
    <location>
        <position position="190"/>
    </location>
</feature>
<feature type="sequence variant" description="In strain: cv. Landsberg erecta." evidence="2">
    <original>S</original>
    <variation>L</variation>
    <location>
        <position position="24"/>
    </location>
</feature>
<feature type="sequence variant" description="In strain: cv. Landsberg erecta." evidence="2">
    <original>R</original>
    <variation>Q</variation>
    <location>
        <position position="27"/>
    </location>
</feature>
<feature type="sequence variant" description="In strain: cv. Landsberg erecta." evidence="2">
    <original>E</original>
    <variation>Q</variation>
    <location>
        <position position="52"/>
    </location>
</feature>
<feature type="sequence variant" description="In strain: cv. Landsberg erecta." evidence="2">
    <original>G</original>
    <variation>S</variation>
    <location>
        <position position="67"/>
    </location>
</feature>
<feature type="sequence variant" description="In strain: cv. Landsberg erecta." evidence="2">
    <original>G</original>
    <variation>S</variation>
    <location>
        <position position="167"/>
    </location>
</feature>
<feature type="sequence variant" description="In strain: cv. Landsberg erecta." evidence="2">
    <original>S</original>
    <variation>T</variation>
    <location>
        <position position="191"/>
    </location>
</feature>
<feature type="sequence variant" description="In strain: cv. Landsberg erecta." evidence="2">
    <original>RKVNTEK</original>
    <variation>GQVKTEN</variation>
    <location>
        <begin position="199"/>
        <end position="205"/>
    </location>
</feature>
<feature type="sequence variant" description="In strain: cv. Landsberg erecta." evidence="2">
    <original>ED</original>
    <variation>DE</variation>
    <location>
        <begin position="213"/>
        <end position="214"/>
    </location>
</feature>
<sequence>MAPRWKWKGAEAKALAEPVSKTVSELRSSLTQTEALGFLSSCNVLLSVESEEAELLDRCCFGRLVVGAEKDKRWIQLSFEEAFFLFYKLKCIKICLHGRSLENEVDLWRSMSSFKQDFAILYKAYSHLRSKNWIVRSGLQYGVDFVVYRHHPSLVHSEYAVLVQSIGGNDRLKVWSDIHCSVRLTGSVAKSLLVLYVNRKVNTEKMNLPLCLEDYTVEEQTIRRWSPELSREDETRT</sequence>